<comment type="function">
    <text evidence="1">Plays a central role during spermatogenesis by repressing transposable elements and preventing their mobilization, which is essential for the germline integrity. Acts via the piRNA metabolic process, which mediates the repression of transposable elements during meiosis by forming complexes composed of piRNAs and Piwi proteins and governs the methylation and subsequent repression of transposons. Its association with pi-bodies suggests a participation in the primary piRNAs metabolic process. Required prior to the pachytene stage to facilitate the production of multiple types of piRNAs, including those associated with repeats involved in the regulation of retrotransposons. May act by mediating protein-protein interactions during germ cell maturation (By similarity).</text>
</comment>
<comment type="subunit">
    <text evidence="1">Interacts with DDX4, PIWIL1, RANBP9 and TDRD1.</text>
</comment>
<comment type="subcellular location">
    <subcellularLocation>
        <location evidence="1">Cytoplasm</location>
    </subcellularLocation>
    <text evidence="1">Component of the meiotic nuage, also named P granule, a germ-cell-specific organelle required to repress transposon activity during meiosis. Specifically localizes to pi-bodies, a subset of the nuage which contains primary piRNAs (By similarity).</text>
</comment>
<reference key="1">
    <citation type="submission" date="2006-09" db="EMBL/GenBank/DDBJ databases">
        <title>NISC comparative sequencing initiative.</title>
        <authorList>
            <person name="Antonellis A."/>
            <person name="Ayele K."/>
            <person name="Benjamin B."/>
            <person name="Blakesley R.W."/>
            <person name="Boakye A."/>
            <person name="Bouffard G.G."/>
            <person name="Brinkley C."/>
            <person name="Brooks S."/>
            <person name="Chu G."/>
            <person name="Coleman H."/>
            <person name="Engle J."/>
            <person name="Gestole M."/>
            <person name="Greene A."/>
            <person name="Guan X."/>
            <person name="Gupta J."/>
            <person name="Haghighi P."/>
            <person name="Han J."/>
            <person name="Hansen N."/>
            <person name="Ho S.-L."/>
            <person name="Hu P."/>
            <person name="Hunter G."/>
            <person name="Hurle B."/>
            <person name="Idol J.R."/>
            <person name="Kwong P."/>
            <person name="Laric P."/>
            <person name="Larson S."/>
            <person name="Lee-Lin S.-Q."/>
            <person name="Legaspi R."/>
            <person name="Madden M."/>
            <person name="Maduro Q.L."/>
            <person name="Maduro V.B."/>
            <person name="Margulies E.H."/>
            <person name="Masiello C."/>
            <person name="Maskeri B."/>
            <person name="McDowell J."/>
            <person name="Mojidi H.A."/>
            <person name="Mullikin J.C."/>
            <person name="Oestreicher J.S."/>
            <person name="Park M."/>
            <person name="Portnoy M.E."/>
            <person name="Prasad A."/>
            <person name="Puri O."/>
            <person name="Reddix-Dugue N."/>
            <person name="Schandler K."/>
            <person name="Schueler M.G."/>
            <person name="Sison C."/>
            <person name="Stantripop S."/>
            <person name="Stephen E."/>
            <person name="Taye A."/>
            <person name="Thomas J.W."/>
            <person name="Thomas P.J."/>
            <person name="Tsipouri V."/>
            <person name="Ung L."/>
            <person name="Vogt J.L."/>
            <person name="Wetherby K.D."/>
            <person name="Young A."/>
            <person name="Green E.D."/>
        </authorList>
    </citation>
    <scope>NUCLEOTIDE SEQUENCE [LARGE SCALE GENOMIC DNA]</scope>
</reference>
<keyword id="KW-0040">ANK repeat</keyword>
<keyword id="KW-0963">Cytoplasm</keyword>
<keyword id="KW-0217">Developmental protein</keyword>
<keyword id="KW-0221">Differentiation</keyword>
<keyword id="KW-0469">Meiosis</keyword>
<keyword id="KW-0597">Phosphoprotein</keyword>
<keyword id="KW-1185">Reference proteome</keyword>
<keyword id="KW-0677">Repeat</keyword>
<keyword id="KW-0943">RNA-mediated gene silencing</keyword>
<keyword id="KW-0744">Spermatogenesis</keyword>
<feature type="chain" id="PRO_0000260397" description="Ankyrin repeat, SAM and basic leucine zipper domain-containing protein 1">
    <location>
        <begin position="1"/>
        <end position="475"/>
    </location>
</feature>
<feature type="repeat" description="ANK 1">
    <location>
        <begin position="45"/>
        <end position="74"/>
    </location>
</feature>
<feature type="repeat" description="ANK 2">
    <location>
        <begin position="78"/>
        <end position="107"/>
    </location>
</feature>
<feature type="repeat" description="ANK 3">
    <location>
        <begin position="110"/>
        <end position="144"/>
    </location>
</feature>
<feature type="repeat" description="ANK 4">
    <location>
        <begin position="148"/>
        <end position="177"/>
    </location>
</feature>
<feature type="repeat" description="ANK 5">
    <location>
        <begin position="181"/>
        <end position="210"/>
    </location>
</feature>
<feature type="repeat" description="ANK 6">
    <location>
        <begin position="214"/>
        <end position="243"/>
    </location>
</feature>
<feature type="domain" description="SAM">
    <location>
        <begin position="272"/>
        <end position="334"/>
    </location>
</feature>
<feature type="region of interest" description="Disordered" evidence="3">
    <location>
        <begin position="1"/>
        <end position="24"/>
    </location>
</feature>
<feature type="modified residue" description="Phosphoserine" evidence="2">
    <location>
        <position position="17"/>
    </location>
</feature>
<feature type="modified residue" description="Phosphoserine" evidence="2">
    <location>
        <position position="18"/>
    </location>
</feature>
<feature type="modified residue" description="Phosphoserine" evidence="2">
    <location>
        <position position="20"/>
    </location>
</feature>
<evidence type="ECO:0000250" key="1"/>
<evidence type="ECO:0000250" key="2">
    <source>
        <dbReference type="UniProtKB" id="Q8VD46"/>
    </source>
</evidence>
<evidence type="ECO:0000256" key="3">
    <source>
        <dbReference type="SAM" id="MobiDB-lite"/>
    </source>
</evidence>
<gene>
    <name type="primary">ASZ1</name>
    <name type="synonym">GASZ</name>
</gene>
<protein>
    <recommendedName>
        <fullName>Ankyrin repeat, SAM and basic leucine zipper domain-containing protein 1</fullName>
    </recommendedName>
    <alternativeName>
        <fullName>Germ cell-specific ankyrin, SAM and basic leucine zipper domain-containing protein</fullName>
    </alternativeName>
</protein>
<name>ASZ1_SHEEP</name>
<dbReference type="EMBL" id="DP000179">
    <property type="protein sequence ID" value="ABI75297.1"/>
    <property type="molecule type" value="Genomic_DNA"/>
</dbReference>
<dbReference type="RefSeq" id="NP_001182238.1">
    <property type="nucleotide sequence ID" value="NM_001195309.2"/>
</dbReference>
<dbReference type="SMR" id="Q09YI3"/>
<dbReference type="STRING" id="9940.ENSOARP00000020381"/>
<dbReference type="PaxDb" id="9940-ENSOARP00000020381"/>
<dbReference type="GeneID" id="100126570"/>
<dbReference type="KEGG" id="oas:100126570"/>
<dbReference type="CTD" id="136991"/>
<dbReference type="eggNOG" id="KOG0504">
    <property type="taxonomic scope" value="Eukaryota"/>
</dbReference>
<dbReference type="OrthoDB" id="439236at2759"/>
<dbReference type="Proteomes" id="UP000002356">
    <property type="component" value="Unplaced"/>
</dbReference>
<dbReference type="GO" id="GO:0071546">
    <property type="term" value="C:pi-body"/>
    <property type="evidence" value="ECO:0000250"/>
    <property type="project" value="UniProtKB"/>
</dbReference>
<dbReference type="GO" id="GO:0030154">
    <property type="term" value="P:cell differentiation"/>
    <property type="evidence" value="ECO:0007669"/>
    <property type="project" value="UniProtKB-KW"/>
</dbReference>
<dbReference type="GO" id="GO:0007140">
    <property type="term" value="P:male meiotic nuclear division"/>
    <property type="evidence" value="ECO:0000250"/>
    <property type="project" value="UniProtKB"/>
</dbReference>
<dbReference type="GO" id="GO:0031047">
    <property type="term" value="P:regulatory ncRNA-mediated gene silencing"/>
    <property type="evidence" value="ECO:0007669"/>
    <property type="project" value="UniProtKB-KW"/>
</dbReference>
<dbReference type="GO" id="GO:0007283">
    <property type="term" value="P:spermatogenesis"/>
    <property type="evidence" value="ECO:0000250"/>
    <property type="project" value="UniProtKB"/>
</dbReference>
<dbReference type="GO" id="GO:0010526">
    <property type="term" value="P:transposable element silencing"/>
    <property type="evidence" value="ECO:0000250"/>
    <property type="project" value="UniProtKB"/>
</dbReference>
<dbReference type="CDD" id="cd09521">
    <property type="entry name" value="SAM_ASZ1"/>
    <property type="match status" value="1"/>
</dbReference>
<dbReference type="FunFam" id="1.25.40.20:FF:000192">
    <property type="entry name" value="Ankyrin repeat, SAM and basic leucine zipper domain-containing 1"/>
    <property type="match status" value="1"/>
</dbReference>
<dbReference type="FunFam" id="1.10.150.50:FF:000060">
    <property type="entry name" value="Ankyrin repeat, SAM and basic leucine zipper domain-containing protein 1"/>
    <property type="match status" value="1"/>
</dbReference>
<dbReference type="Gene3D" id="1.25.40.20">
    <property type="entry name" value="Ankyrin repeat-containing domain"/>
    <property type="match status" value="1"/>
</dbReference>
<dbReference type="Gene3D" id="1.10.150.50">
    <property type="entry name" value="Transcription Factor, Ets-1"/>
    <property type="match status" value="1"/>
</dbReference>
<dbReference type="InterPro" id="IPR002110">
    <property type="entry name" value="Ankyrin_rpt"/>
</dbReference>
<dbReference type="InterPro" id="IPR036770">
    <property type="entry name" value="Ankyrin_rpt-contain_sf"/>
</dbReference>
<dbReference type="InterPro" id="IPR042650">
    <property type="entry name" value="Asz1_SAM"/>
</dbReference>
<dbReference type="InterPro" id="IPR001660">
    <property type="entry name" value="SAM"/>
</dbReference>
<dbReference type="InterPro" id="IPR013761">
    <property type="entry name" value="SAM/pointed_sf"/>
</dbReference>
<dbReference type="PANTHER" id="PTHR24157">
    <property type="entry name" value="ANKYRIN REPEAT, SAM AND BASIC LEUCINE ZIPPER DOMAIN-CONTAINING PROTEIN 1"/>
    <property type="match status" value="1"/>
</dbReference>
<dbReference type="PANTHER" id="PTHR24157:SF3">
    <property type="entry name" value="ANKYRIN REPEAT, SAM AND BASIC LEUCINE ZIPPER DOMAIN-CONTAINING PROTEIN 1"/>
    <property type="match status" value="1"/>
</dbReference>
<dbReference type="Pfam" id="PF12796">
    <property type="entry name" value="Ank_2"/>
    <property type="match status" value="1"/>
</dbReference>
<dbReference type="Pfam" id="PF13637">
    <property type="entry name" value="Ank_4"/>
    <property type="match status" value="1"/>
</dbReference>
<dbReference type="Pfam" id="PF07647">
    <property type="entry name" value="SAM_2"/>
    <property type="match status" value="1"/>
</dbReference>
<dbReference type="SMART" id="SM00248">
    <property type="entry name" value="ANK"/>
    <property type="match status" value="5"/>
</dbReference>
<dbReference type="SUPFAM" id="SSF48403">
    <property type="entry name" value="Ankyrin repeat"/>
    <property type="match status" value="1"/>
</dbReference>
<dbReference type="SUPFAM" id="SSF140860">
    <property type="entry name" value="Pseudo ankyrin repeat-like"/>
    <property type="match status" value="1"/>
</dbReference>
<dbReference type="SUPFAM" id="SSF47769">
    <property type="entry name" value="SAM/Pointed domain"/>
    <property type="match status" value="1"/>
</dbReference>
<dbReference type="PROSITE" id="PS50297">
    <property type="entry name" value="ANK_REP_REGION"/>
    <property type="match status" value="1"/>
</dbReference>
<dbReference type="PROSITE" id="PS50088">
    <property type="entry name" value="ANK_REPEAT"/>
    <property type="match status" value="3"/>
</dbReference>
<accession>Q09YI3</accession>
<sequence>MAAGPLRGLAVAGGGESSESEDDGWEIGYLDRTAQKLKGPLPVEERQETFKKALTSGNISLVEELLDSGISVDTSFQYGWTSLMYAASVSNVELVRVLLDRGANASFDKDKQTVLITACSARGSEEKILKCIELLLSRNADPNVACRRLMTPIMYAARDGHPQVVALLVAHGAEVNTQDENGYTALTWAARQGHKNVVLKLLELGANKMIQTKDGKTPSEIAKRNKHLEIFNFLSLTLNPLEGKLHQLTKEESISKLLRTDSDKEKDHIFSSYTAFGDLEIFLHGLGLEHMTDLLKEREITLRHLLTMRKDELAKNGITSRDQQKIMAALKELEVEEIKFGELPEVAKLEISGDEFLNFLLKLNKQCGHLIKAVQNIITELPVNSHKIVLEWASPRNFTSVCEELVSNVEDLSEEVCKLKDLIQKLQNERENDPTHIPLMEEVSTWNTRILKRTAITVCGFGVLLFICKLTFQKK</sequence>
<proteinExistence type="inferred from homology"/>
<organism>
    <name type="scientific">Ovis aries</name>
    <name type="common">Sheep</name>
    <dbReference type="NCBI Taxonomy" id="9940"/>
    <lineage>
        <taxon>Eukaryota</taxon>
        <taxon>Metazoa</taxon>
        <taxon>Chordata</taxon>
        <taxon>Craniata</taxon>
        <taxon>Vertebrata</taxon>
        <taxon>Euteleostomi</taxon>
        <taxon>Mammalia</taxon>
        <taxon>Eutheria</taxon>
        <taxon>Laurasiatheria</taxon>
        <taxon>Artiodactyla</taxon>
        <taxon>Ruminantia</taxon>
        <taxon>Pecora</taxon>
        <taxon>Bovidae</taxon>
        <taxon>Caprinae</taxon>
        <taxon>Ovis</taxon>
    </lineage>
</organism>